<evidence type="ECO:0000250" key="1"/>
<evidence type="ECO:0000256" key="2">
    <source>
        <dbReference type="SAM" id="MobiDB-lite"/>
    </source>
</evidence>
<evidence type="ECO:0000305" key="3"/>
<gene>
    <name type="primary">SLD5</name>
    <name type="ordered locus">KLLA0F11121g</name>
</gene>
<accession>Q6CKF3</accession>
<keyword id="KW-0159">Chromosome partition</keyword>
<keyword id="KW-0235">DNA replication</keyword>
<keyword id="KW-0539">Nucleus</keyword>
<keyword id="KW-1185">Reference proteome</keyword>
<comment type="function">
    <text evidence="1">The GINS complex plays an essential role in the initiation of DNA replication. Has a role in chromosome segregation (By similarity).</text>
</comment>
<comment type="subunit">
    <text evidence="1">Component of the GINS complex which is a heterotetramer of SLD5, PSF1, PSF2 and PSF3.</text>
</comment>
<comment type="subcellular location">
    <subcellularLocation>
        <location evidence="1">Nucleus</location>
    </subcellularLocation>
</comment>
<comment type="similarity">
    <text evidence="3">Belongs to the GINS4/SLD5 family.</text>
</comment>
<feature type="chain" id="PRO_0000255433" description="DNA replication complex GINS protein SLD5">
    <location>
        <begin position="1"/>
        <end position="292"/>
    </location>
</feature>
<feature type="region of interest" description="Disordered" evidence="2">
    <location>
        <begin position="16"/>
        <end position="46"/>
    </location>
</feature>
<feature type="compositionally biased region" description="Polar residues" evidence="2">
    <location>
        <begin position="18"/>
        <end position="39"/>
    </location>
</feature>
<protein>
    <recommendedName>
        <fullName>DNA replication complex GINS protein SLD5</fullName>
    </recommendedName>
</protein>
<proteinExistence type="inferred from homology"/>
<organism>
    <name type="scientific">Kluyveromyces lactis (strain ATCC 8585 / CBS 2359 / DSM 70799 / NBRC 1267 / NRRL Y-1140 / WM37)</name>
    <name type="common">Yeast</name>
    <name type="synonym">Candida sphaerica</name>
    <dbReference type="NCBI Taxonomy" id="284590"/>
    <lineage>
        <taxon>Eukaryota</taxon>
        <taxon>Fungi</taxon>
        <taxon>Dikarya</taxon>
        <taxon>Ascomycota</taxon>
        <taxon>Saccharomycotina</taxon>
        <taxon>Saccharomycetes</taxon>
        <taxon>Saccharomycetales</taxon>
        <taxon>Saccharomycetaceae</taxon>
        <taxon>Kluyveromyces</taxon>
    </lineage>
</organism>
<sequence length="292" mass="33573">MSIDIDDILAELDRDTTAVEQNASSYPDQSDRTQGNDVSQIRPADKAVDPVAPTQFNKIDDYQKLITHWKNERMSPELLPYPHHLMTRTLIRIQERIELIETLSMGYLEDNQELTVDSKLPLLCMEAELERLKFLVRSFIRCRLSKIDKYSIYLRQQSELPNNAGLSRLDLLMSKEEVKYHMKHSDILLKLFNNAVLKHLPEELQAVNDTEGSISMIDEPDWNKTVFILVCGGVVDESGIDSKLTTDDDGKHCYSVIIEDLNEEIYLLIGAVYVIRYSVIRDLMTEGRVVLI</sequence>
<dbReference type="EMBL" id="CR382126">
    <property type="protein sequence ID" value="CAG98294.1"/>
    <property type="molecule type" value="Genomic_DNA"/>
</dbReference>
<dbReference type="RefSeq" id="XP_455586.1">
    <property type="nucleotide sequence ID" value="XM_455586.1"/>
</dbReference>
<dbReference type="SMR" id="Q6CKF3"/>
<dbReference type="FunCoup" id="Q6CKF3">
    <property type="interactions" value="670"/>
</dbReference>
<dbReference type="STRING" id="284590.Q6CKF3"/>
<dbReference type="PaxDb" id="284590-Q6CKF3"/>
<dbReference type="KEGG" id="kla:KLLA0_F11121g"/>
<dbReference type="eggNOG" id="KOG3176">
    <property type="taxonomic scope" value="Eukaryota"/>
</dbReference>
<dbReference type="HOGENOM" id="CLU_071893_2_0_1"/>
<dbReference type="InParanoid" id="Q6CKF3"/>
<dbReference type="OMA" id="ILETAWI"/>
<dbReference type="Proteomes" id="UP000000598">
    <property type="component" value="Chromosome F"/>
</dbReference>
<dbReference type="GO" id="GO:0000811">
    <property type="term" value="C:GINS complex"/>
    <property type="evidence" value="ECO:0007669"/>
    <property type="project" value="TreeGrafter"/>
</dbReference>
<dbReference type="GO" id="GO:0007059">
    <property type="term" value="P:chromosome segregation"/>
    <property type="evidence" value="ECO:0007669"/>
    <property type="project" value="UniProtKB-KW"/>
</dbReference>
<dbReference type="GO" id="GO:0006261">
    <property type="term" value="P:DNA-templated DNA replication"/>
    <property type="evidence" value="ECO:0007669"/>
    <property type="project" value="InterPro"/>
</dbReference>
<dbReference type="GO" id="GO:0000727">
    <property type="term" value="P:double-strand break repair via break-induced replication"/>
    <property type="evidence" value="ECO:0007669"/>
    <property type="project" value="TreeGrafter"/>
</dbReference>
<dbReference type="CDD" id="cd11711">
    <property type="entry name" value="GINS_A_Sld5"/>
    <property type="match status" value="1"/>
</dbReference>
<dbReference type="FunFam" id="1.20.58.1030:FF:000009">
    <property type="entry name" value="DNA replication complex GINS protein SLD5"/>
    <property type="match status" value="1"/>
</dbReference>
<dbReference type="Gene3D" id="1.20.58.1030">
    <property type="match status" value="1"/>
</dbReference>
<dbReference type="InterPro" id="IPR021151">
    <property type="entry name" value="GINS_A"/>
</dbReference>
<dbReference type="InterPro" id="IPR036224">
    <property type="entry name" value="GINS_bundle-like_dom_sf"/>
</dbReference>
<dbReference type="InterPro" id="IPR008591">
    <property type="entry name" value="GINS_Sld5"/>
</dbReference>
<dbReference type="InterPro" id="IPR031633">
    <property type="entry name" value="SLD5_C"/>
</dbReference>
<dbReference type="InterPro" id="IPR038749">
    <property type="entry name" value="Sld5_GINS_A"/>
</dbReference>
<dbReference type="PANTHER" id="PTHR21206:SF0">
    <property type="entry name" value="DNA REPLICATION COMPLEX GINS PROTEIN SLD5"/>
    <property type="match status" value="1"/>
</dbReference>
<dbReference type="PANTHER" id="PTHR21206">
    <property type="entry name" value="SLD5 PROTEIN"/>
    <property type="match status" value="1"/>
</dbReference>
<dbReference type="Pfam" id="PF05916">
    <property type="entry name" value="Sld5"/>
    <property type="match status" value="1"/>
</dbReference>
<dbReference type="Pfam" id="PF16922">
    <property type="entry name" value="SLD5_C"/>
    <property type="match status" value="1"/>
</dbReference>
<dbReference type="PIRSF" id="PIRSF007764">
    <property type="entry name" value="Sld5"/>
    <property type="match status" value="1"/>
</dbReference>
<dbReference type="SUPFAM" id="SSF158573">
    <property type="entry name" value="GINS helical bundle-like"/>
    <property type="match status" value="1"/>
</dbReference>
<dbReference type="SUPFAM" id="SSF160059">
    <property type="entry name" value="PriA/YqbF domain"/>
    <property type="match status" value="1"/>
</dbReference>
<reference key="1">
    <citation type="journal article" date="2004" name="Nature">
        <title>Genome evolution in yeasts.</title>
        <authorList>
            <person name="Dujon B."/>
            <person name="Sherman D."/>
            <person name="Fischer G."/>
            <person name="Durrens P."/>
            <person name="Casaregola S."/>
            <person name="Lafontaine I."/>
            <person name="de Montigny J."/>
            <person name="Marck C."/>
            <person name="Neuveglise C."/>
            <person name="Talla E."/>
            <person name="Goffard N."/>
            <person name="Frangeul L."/>
            <person name="Aigle M."/>
            <person name="Anthouard V."/>
            <person name="Babour A."/>
            <person name="Barbe V."/>
            <person name="Barnay S."/>
            <person name="Blanchin S."/>
            <person name="Beckerich J.-M."/>
            <person name="Beyne E."/>
            <person name="Bleykasten C."/>
            <person name="Boisrame A."/>
            <person name="Boyer J."/>
            <person name="Cattolico L."/>
            <person name="Confanioleri F."/>
            <person name="de Daruvar A."/>
            <person name="Despons L."/>
            <person name="Fabre E."/>
            <person name="Fairhead C."/>
            <person name="Ferry-Dumazet H."/>
            <person name="Groppi A."/>
            <person name="Hantraye F."/>
            <person name="Hennequin C."/>
            <person name="Jauniaux N."/>
            <person name="Joyet P."/>
            <person name="Kachouri R."/>
            <person name="Kerrest A."/>
            <person name="Koszul R."/>
            <person name="Lemaire M."/>
            <person name="Lesur I."/>
            <person name="Ma L."/>
            <person name="Muller H."/>
            <person name="Nicaud J.-M."/>
            <person name="Nikolski M."/>
            <person name="Oztas S."/>
            <person name="Ozier-Kalogeropoulos O."/>
            <person name="Pellenz S."/>
            <person name="Potier S."/>
            <person name="Richard G.-F."/>
            <person name="Straub M.-L."/>
            <person name="Suleau A."/>
            <person name="Swennen D."/>
            <person name="Tekaia F."/>
            <person name="Wesolowski-Louvel M."/>
            <person name="Westhof E."/>
            <person name="Wirth B."/>
            <person name="Zeniou-Meyer M."/>
            <person name="Zivanovic Y."/>
            <person name="Bolotin-Fukuhara M."/>
            <person name="Thierry A."/>
            <person name="Bouchier C."/>
            <person name="Caudron B."/>
            <person name="Scarpelli C."/>
            <person name="Gaillardin C."/>
            <person name="Weissenbach J."/>
            <person name="Wincker P."/>
            <person name="Souciet J.-L."/>
        </authorList>
    </citation>
    <scope>NUCLEOTIDE SEQUENCE [LARGE SCALE GENOMIC DNA]</scope>
    <source>
        <strain>ATCC 8585 / CBS 2359 / DSM 70799 / NBRC 1267 / NRRL Y-1140 / WM37</strain>
    </source>
</reference>
<name>SLD5_KLULA</name>